<sequence length="170" mass="18630">MDFKQHIAIVPDYPKEGIVFKDITPLMNDGKAYKAATDAIVEYAKERDIDVVVGPEARGFIIGCPVSYALEVGFAPVRKLGKLPREVITVDYGKEYGKDVLTIHKDAIKPGQRVLITDDLLATGGTIEATIKLVEELGGVVAGIAFLVELTYLDGRKMLDGYDVLVLEKY</sequence>
<accession>Q817X3</accession>
<organism>
    <name type="scientific">Bacillus cereus (strain ATCC 14579 / DSM 31 / CCUG 7414 / JCM 2152 / NBRC 15305 / NCIMB 9373 / NCTC 2599 / NRRL B-3711)</name>
    <dbReference type="NCBI Taxonomy" id="226900"/>
    <lineage>
        <taxon>Bacteria</taxon>
        <taxon>Bacillati</taxon>
        <taxon>Bacillota</taxon>
        <taxon>Bacilli</taxon>
        <taxon>Bacillales</taxon>
        <taxon>Bacillaceae</taxon>
        <taxon>Bacillus</taxon>
        <taxon>Bacillus cereus group</taxon>
    </lineage>
</organism>
<comment type="function">
    <text evidence="1">Catalyzes a salvage reaction resulting in the formation of AMP, that is energically less costly than de novo synthesis.</text>
</comment>
<comment type="catalytic activity">
    <reaction evidence="1">
        <text>AMP + diphosphate = 5-phospho-alpha-D-ribose 1-diphosphate + adenine</text>
        <dbReference type="Rhea" id="RHEA:16609"/>
        <dbReference type="ChEBI" id="CHEBI:16708"/>
        <dbReference type="ChEBI" id="CHEBI:33019"/>
        <dbReference type="ChEBI" id="CHEBI:58017"/>
        <dbReference type="ChEBI" id="CHEBI:456215"/>
        <dbReference type="EC" id="2.4.2.7"/>
    </reaction>
</comment>
<comment type="pathway">
    <text evidence="1">Purine metabolism; AMP biosynthesis via salvage pathway; AMP from adenine: step 1/1.</text>
</comment>
<comment type="subunit">
    <text evidence="1">Homodimer.</text>
</comment>
<comment type="subcellular location">
    <subcellularLocation>
        <location evidence="1">Cytoplasm</location>
    </subcellularLocation>
</comment>
<comment type="similarity">
    <text evidence="1">Belongs to the purine/pyrimidine phosphoribosyltransferase family.</text>
</comment>
<protein>
    <recommendedName>
        <fullName evidence="1">Adenine phosphoribosyltransferase</fullName>
        <shortName evidence="1">APRT</shortName>
        <ecNumber evidence="1">2.4.2.7</ecNumber>
    </recommendedName>
</protein>
<proteinExistence type="inferred from homology"/>
<keyword id="KW-0963">Cytoplasm</keyword>
<keyword id="KW-0328">Glycosyltransferase</keyword>
<keyword id="KW-0660">Purine salvage</keyword>
<keyword id="KW-1185">Reference proteome</keyword>
<keyword id="KW-0808">Transferase</keyword>
<evidence type="ECO:0000255" key="1">
    <source>
        <dbReference type="HAMAP-Rule" id="MF_00004"/>
    </source>
</evidence>
<feature type="chain" id="PRO_0000149347" description="Adenine phosphoribosyltransferase">
    <location>
        <begin position="1"/>
        <end position="170"/>
    </location>
</feature>
<reference key="1">
    <citation type="journal article" date="2003" name="Nature">
        <title>Genome sequence of Bacillus cereus and comparative analysis with Bacillus anthracis.</title>
        <authorList>
            <person name="Ivanova N."/>
            <person name="Sorokin A."/>
            <person name="Anderson I."/>
            <person name="Galleron N."/>
            <person name="Candelon B."/>
            <person name="Kapatral V."/>
            <person name="Bhattacharyya A."/>
            <person name="Reznik G."/>
            <person name="Mikhailova N."/>
            <person name="Lapidus A."/>
            <person name="Chu L."/>
            <person name="Mazur M."/>
            <person name="Goltsman E."/>
            <person name="Larsen N."/>
            <person name="D'Souza M."/>
            <person name="Walunas T."/>
            <person name="Grechkin Y."/>
            <person name="Pusch G."/>
            <person name="Haselkorn R."/>
            <person name="Fonstein M."/>
            <person name="Ehrlich S.D."/>
            <person name="Overbeek R."/>
            <person name="Kyrpides N.C."/>
        </authorList>
    </citation>
    <scope>NUCLEOTIDE SEQUENCE [LARGE SCALE GENOMIC DNA]</scope>
    <source>
        <strain>ATCC 14579 / DSM 31 / CCUG 7414 / JCM 2152 / NBRC 15305 / NCIMB 9373 / NCTC 2599 / NRRL B-3711</strain>
    </source>
</reference>
<name>APT_BACCR</name>
<gene>
    <name evidence="1" type="primary">apt</name>
    <name type="ordered locus">BC_4402</name>
</gene>
<dbReference type="EC" id="2.4.2.7" evidence="1"/>
<dbReference type="EMBL" id="AE016877">
    <property type="protein sequence ID" value="AAP11315.1"/>
    <property type="molecule type" value="Genomic_DNA"/>
</dbReference>
<dbReference type="RefSeq" id="NP_834114.1">
    <property type="nucleotide sequence ID" value="NC_004722.1"/>
</dbReference>
<dbReference type="RefSeq" id="WP_000346215.1">
    <property type="nucleotide sequence ID" value="NZ_CP138336.1"/>
</dbReference>
<dbReference type="SMR" id="Q817X3"/>
<dbReference type="STRING" id="226900.BC_4402"/>
<dbReference type="MetOSite" id="Q817X3"/>
<dbReference type="KEGG" id="bce:BC4402"/>
<dbReference type="PATRIC" id="fig|226900.8.peg.4553"/>
<dbReference type="HOGENOM" id="CLU_063339_3_0_9"/>
<dbReference type="OrthoDB" id="9803963at2"/>
<dbReference type="UniPathway" id="UPA00588">
    <property type="reaction ID" value="UER00646"/>
</dbReference>
<dbReference type="Proteomes" id="UP000001417">
    <property type="component" value="Chromosome"/>
</dbReference>
<dbReference type="GO" id="GO:0005737">
    <property type="term" value="C:cytoplasm"/>
    <property type="evidence" value="ECO:0007669"/>
    <property type="project" value="UniProtKB-SubCell"/>
</dbReference>
<dbReference type="GO" id="GO:0003999">
    <property type="term" value="F:adenine phosphoribosyltransferase activity"/>
    <property type="evidence" value="ECO:0000318"/>
    <property type="project" value="GO_Central"/>
</dbReference>
<dbReference type="GO" id="GO:0006168">
    <property type="term" value="P:adenine salvage"/>
    <property type="evidence" value="ECO:0007669"/>
    <property type="project" value="InterPro"/>
</dbReference>
<dbReference type="GO" id="GO:0044209">
    <property type="term" value="P:AMP salvage"/>
    <property type="evidence" value="ECO:0007669"/>
    <property type="project" value="UniProtKB-UniRule"/>
</dbReference>
<dbReference type="GO" id="GO:0006166">
    <property type="term" value="P:purine ribonucleoside salvage"/>
    <property type="evidence" value="ECO:0007669"/>
    <property type="project" value="UniProtKB-KW"/>
</dbReference>
<dbReference type="CDD" id="cd06223">
    <property type="entry name" value="PRTases_typeI"/>
    <property type="match status" value="1"/>
</dbReference>
<dbReference type="FunFam" id="3.40.50.2020:FF:000004">
    <property type="entry name" value="Adenine phosphoribosyltransferase"/>
    <property type="match status" value="1"/>
</dbReference>
<dbReference type="Gene3D" id="3.40.50.2020">
    <property type="match status" value="1"/>
</dbReference>
<dbReference type="HAMAP" id="MF_00004">
    <property type="entry name" value="Aden_phosphoribosyltr"/>
    <property type="match status" value="1"/>
</dbReference>
<dbReference type="InterPro" id="IPR005764">
    <property type="entry name" value="Ade_phspho_trans"/>
</dbReference>
<dbReference type="InterPro" id="IPR000836">
    <property type="entry name" value="PRibTrfase_dom"/>
</dbReference>
<dbReference type="InterPro" id="IPR029057">
    <property type="entry name" value="PRTase-like"/>
</dbReference>
<dbReference type="InterPro" id="IPR050054">
    <property type="entry name" value="UPRTase/APRTase"/>
</dbReference>
<dbReference type="NCBIfam" id="TIGR01090">
    <property type="entry name" value="apt"/>
    <property type="match status" value="1"/>
</dbReference>
<dbReference type="NCBIfam" id="NF002633">
    <property type="entry name" value="PRK02304.1-2"/>
    <property type="match status" value="1"/>
</dbReference>
<dbReference type="NCBIfam" id="NF002634">
    <property type="entry name" value="PRK02304.1-3"/>
    <property type="match status" value="1"/>
</dbReference>
<dbReference type="NCBIfam" id="NF002636">
    <property type="entry name" value="PRK02304.1-5"/>
    <property type="match status" value="1"/>
</dbReference>
<dbReference type="PANTHER" id="PTHR32315">
    <property type="entry name" value="ADENINE PHOSPHORIBOSYLTRANSFERASE"/>
    <property type="match status" value="1"/>
</dbReference>
<dbReference type="PANTHER" id="PTHR32315:SF3">
    <property type="entry name" value="ADENINE PHOSPHORIBOSYLTRANSFERASE"/>
    <property type="match status" value="1"/>
</dbReference>
<dbReference type="Pfam" id="PF00156">
    <property type="entry name" value="Pribosyltran"/>
    <property type="match status" value="1"/>
</dbReference>
<dbReference type="SUPFAM" id="SSF53271">
    <property type="entry name" value="PRTase-like"/>
    <property type="match status" value="1"/>
</dbReference>